<proteinExistence type="predicted"/>
<protein>
    <recommendedName>
        <fullName>Putative F-box protein At5g52610</fullName>
    </recommendedName>
</protein>
<gene>
    <name type="ordered locus">At5g52610</name>
    <name type="ORF">F6N7.10</name>
</gene>
<name>FB291_ARATH</name>
<reference key="1">
    <citation type="submission" date="1999-04" db="EMBL/GenBank/DDBJ databases">
        <title>Structural analysis of Arabidopsis thaliana chromosome 5. XI.</title>
        <authorList>
            <person name="Kaneko T."/>
            <person name="Katoh T."/>
            <person name="Asamizu E."/>
            <person name="Sato S."/>
            <person name="Nakamura Y."/>
            <person name="Kotani H."/>
            <person name="Tabata S."/>
        </authorList>
    </citation>
    <scope>NUCLEOTIDE SEQUENCE [LARGE SCALE GENOMIC DNA]</scope>
    <source>
        <strain>cv. Columbia</strain>
    </source>
</reference>
<reference key="2">
    <citation type="journal article" date="2017" name="Plant J.">
        <title>Araport11: a complete reannotation of the Arabidopsis thaliana reference genome.</title>
        <authorList>
            <person name="Cheng C.Y."/>
            <person name="Krishnakumar V."/>
            <person name="Chan A.P."/>
            <person name="Thibaud-Nissen F."/>
            <person name="Schobel S."/>
            <person name="Town C.D."/>
        </authorList>
    </citation>
    <scope>GENOME REANNOTATION</scope>
    <source>
        <strain>cv. Columbia</strain>
    </source>
</reference>
<keyword id="KW-1185">Reference proteome</keyword>
<organism>
    <name type="scientific">Arabidopsis thaliana</name>
    <name type="common">Mouse-ear cress</name>
    <dbReference type="NCBI Taxonomy" id="3702"/>
    <lineage>
        <taxon>Eukaryota</taxon>
        <taxon>Viridiplantae</taxon>
        <taxon>Streptophyta</taxon>
        <taxon>Embryophyta</taxon>
        <taxon>Tracheophyta</taxon>
        <taxon>Spermatophyta</taxon>
        <taxon>Magnoliopsida</taxon>
        <taxon>eudicotyledons</taxon>
        <taxon>Gunneridae</taxon>
        <taxon>Pentapetalae</taxon>
        <taxon>rosids</taxon>
        <taxon>malvids</taxon>
        <taxon>Brassicales</taxon>
        <taxon>Brassicaceae</taxon>
        <taxon>Camelineae</taxon>
        <taxon>Arabidopsis</taxon>
    </lineage>
</organism>
<dbReference type="EMBL" id="AB025606">
    <property type="protein sequence ID" value="BAA98079.1"/>
    <property type="molecule type" value="Genomic_DNA"/>
</dbReference>
<dbReference type="EMBL" id="CP002688">
    <property type="protein sequence ID" value="AED96241.1"/>
    <property type="molecule type" value="Genomic_DNA"/>
</dbReference>
<dbReference type="RefSeq" id="NP_200073.1">
    <property type="nucleotide sequence ID" value="NM_124639.1"/>
</dbReference>
<dbReference type="FunCoup" id="Q9LTF6">
    <property type="interactions" value="16"/>
</dbReference>
<dbReference type="STRING" id="3702.Q9LTF6"/>
<dbReference type="PaxDb" id="3702-AT5G52610.1"/>
<dbReference type="EnsemblPlants" id="AT5G52610.1">
    <property type="protein sequence ID" value="AT5G52610.1"/>
    <property type="gene ID" value="AT5G52610"/>
</dbReference>
<dbReference type="GeneID" id="835338"/>
<dbReference type="Gramene" id="AT5G52610.1">
    <property type="protein sequence ID" value="AT5G52610.1"/>
    <property type="gene ID" value="AT5G52610"/>
</dbReference>
<dbReference type="KEGG" id="ath:AT5G52610"/>
<dbReference type="Araport" id="AT5G52610"/>
<dbReference type="TAIR" id="AT5G52610"/>
<dbReference type="eggNOG" id="ENOG502SXXQ">
    <property type="taxonomic scope" value="Eukaryota"/>
</dbReference>
<dbReference type="HOGENOM" id="CLU_027176_8_1_1"/>
<dbReference type="InParanoid" id="Q9LTF6"/>
<dbReference type="OMA" id="VVYYNLV"/>
<dbReference type="PhylomeDB" id="Q9LTF6"/>
<dbReference type="PRO" id="PR:Q9LTF6"/>
<dbReference type="Proteomes" id="UP000006548">
    <property type="component" value="Chromosome 5"/>
</dbReference>
<dbReference type="ExpressionAtlas" id="Q9LTF6">
    <property type="expression patterns" value="baseline"/>
</dbReference>
<dbReference type="Gene3D" id="1.20.1280.50">
    <property type="match status" value="1"/>
</dbReference>
<dbReference type="InterPro" id="IPR013187">
    <property type="entry name" value="F-box-assoc_dom_typ3"/>
</dbReference>
<dbReference type="InterPro" id="IPR017451">
    <property type="entry name" value="F-box-assoc_interact_dom"/>
</dbReference>
<dbReference type="InterPro" id="IPR036047">
    <property type="entry name" value="F-box-like_dom_sf"/>
</dbReference>
<dbReference type="InterPro" id="IPR001810">
    <property type="entry name" value="F-box_dom"/>
</dbReference>
<dbReference type="NCBIfam" id="TIGR01640">
    <property type="entry name" value="F_box_assoc_1"/>
    <property type="match status" value="1"/>
</dbReference>
<dbReference type="PANTHER" id="PTHR31111">
    <property type="entry name" value="BNAA05G37150D PROTEIN-RELATED"/>
    <property type="match status" value="1"/>
</dbReference>
<dbReference type="PANTHER" id="PTHR31111:SF132">
    <property type="entry name" value="F-BOX ASSOCIATED UBIQUITINATION EFFECTOR FAMILY PROTEIN-RELATED"/>
    <property type="match status" value="1"/>
</dbReference>
<dbReference type="Pfam" id="PF00646">
    <property type="entry name" value="F-box"/>
    <property type="match status" value="1"/>
</dbReference>
<dbReference type="Pfam" id="PF08268">
    <property type="entry name" value="FBA_3"/>
    <property type="match status" value="1"/>
</dbReference>
<dbReference type="SMART" id="SM00256">
    <property type="entry name" value="FBOX"/>
    <property type="match status" value="1"/>
</dbReference>
<dbReference type="SUPFAM" id="SSF81383">
    <property type="entry name" value="F-box domain"/>
    <property type="match status" value="1"/>
</dbReference>
<sequence length="351" mass="40327">MISEDLLVEILLRLPVKPLARCLCVCKLWATIIRSRYFINLYQSRSSTRQPYVMFALRDIFTSCRWHFFSSSQPSLVTKATCSANNSSHTPDCVNGLICVEYMSQLWISNPATRKGVLVPQSAPHQKFRKWYMGYDPINYQYKVLFFSKQYLLSPYKLEVFTLEGQGSWKMIEVENIPSPSTRGICIDGVVYYGAQTAHGLRLVRFYVATEKFGDFIEIPVGASNVYDMNFGYSKLVNYQGKLALLAAKSMSMYDLWVLEDAGKQEWSKVSIVLTREMFSYDLVWLGAVGFVAGSDELIVTAHDRFYQIYLVYVDLKMKRSREVWLGGIRCSDRSSLVLTFTDYVESIMLL</sequence>
<feature type="chain" id="PRO_0000283557" description="Putative F-box protein At5g52610">
    <location>
        <begin position="1"/>
        <end position="351"/>
    </location>
</feature>
<feature type="domain" description="F-box">
    <location>
        <begin position="1"/>
        <end position="41"/>
    </location>
</feature>
<accession>Q9LTF6</accession>